<comment type="function">
    <text evidence="1">May be a post-translational regulator that controls the metabolic fate of L-threonine or the potentially toxic intermediate 2-ketobutyrate.</text>
</comment>
<comment type="pathway">
    <text>Amino-acid degradation; L-threonine degradation via propanoate pathway.</text>
</comment>
<comment type="subunit">
    <text evidence="1">Homotrimer.</text>
</comment>
<comment type="similarity">
    <text evidence="2">Belongs to the RutC family.</text>
</comment>
<keyword id="KW-0378">Hydrolase</keyword>
<keyword id="KW-0663">Pyridoxal phosphate</keyword>
<keyword id="KW-1185">Reference proteome</keyword>
<organism>
    <name type="scientific">Shigella flexneri</name>
    <dbReference type="NCBI Taxonomy" id="623"/>
    <lineage>
        <taxon>Bacteria</taxon>
        <taxon>Pseudomonadati</taxon>
        <taxon>Pseudomonadota</taxon>
        <taxon>Gammaproteobacteria</taxon>
        <taxon>Enterobacterales</taxon>
        <taxon>Enterobacteriaceae</taxon>
        <taxon>Shigella</taxon>
    </lineage>
</organism>
<dbReference type="EC" id="3.5.4.-"/>
<dbReference type="EMBL" id="AE005674">
    <property type="protein sequence ID" value="AAN44624.2"/>
    <property type="molecule type" value="Genomic_DNA"/>
</dbReference>
<dbReference type="EMBL" id="AE014073">
    <property type="protein sequence ID" value="AAP18438.1"/>
    <property type="molecule type" value="Genomic_DNA"/>
</dbReference>
<dbReference type="RefSeq" id="WP_000719990.1">
    <property type="nucleotide sequence ID" value="NZ_WPGW01000077.1"/>
</dbReference>
<dbReference type="SMR" id="P0AGL4"/>
<dbReference type="STRING" id="198214.SF3153"/>
<dbReference type="PaxDb" id="198214-SF3153"/>
<dbReference type="KEGG" id="sfl:SF3153"/>
<dbReference type="KEGG" id="sfx:S3365"/>
<dbReference type="PATRIC" id="fig|198214.7.peg.3743"/>
<dbReference type="HOGENOM" id="CLU_100715_7_1_6"/>
<dbReference type="UniPathway" id="UPA00052"/>
<dbReference type="Proteomes" id="UP000001006">
    <property type="component" value="Chromosome"/>
</dbReference>
<dbReference type="Proteomes" id="UP000002673">
    <property type="component" value="Chromosome"/>
</dbReference>
<dbReference type="GO" id="GO:0005829">
    <property type="term" value="C:cytosol"/>
    <property type="evidence" value="ECO:0007669"/>
    <property type="project" value="TreeGrafter"/>
</dbReference>
<dbReference type="GO" id="GO:0019239">
    <property type="term" value="F:deaminase activity"/>
    <property type="evidence" value="ECO:0007669"/>
    <property type="project" value="TreeGrafter"/>
</dbReference>
<dbReference type="GO" id="GO:0070689">
    <property type="term" value="P:L-threonine catabolic process to propionate"/>
    <property type="evidence" value="ECO:0007669"/>
    <property type="project" value="UniProtKB-UniPathway"/>
</dbReference>
<dbReference type="GO" id="GO:0006566">
    <property type="term" value="P:threonine metabolic process"/>
    <property type="evidence" value="ECO:0000250"/>
    <property type="project" value="UniProtKB"/>
</dbReference>
<dbReference type="CDD" id="cd00448">
    <property type="entry name" value="YjgF_YER057c_UK114_family"/>
    <property type="match status" value="1"/>
</dbReference>
<dbReference type="FunFam" id="3.30.1330.40:FF:000001">
    <property type="entry name" value="L-PSP family endoribonuclease"/>
    <property type="match status" value="1"/>
</dbReference>
<dbReference type="Gene3D" id="3.30.1330.40">
    <property type="entry name" value="RutC-like"/>
    <property type="match status" value="1"/>
</dbReference>
<dbReference type="InterPro" id="IPR006056">
    <property type="entry name" value="RidA"/>
</dbReference>
<dbReference type="InterPro" id="IPR019897">
    <property type="entry name" value="RidA_CS"/>
</dbReference>
<dbReference type="InterPro" id="IPR035959">
    <property type="entry name" value="RutC-like_sf"/>
</dbReference>
<dbReference type="InterPro" id="IPR006175">
    <property type="entry name" value="YjgF/YER057c/UK114"/>
</dbReference>
<dbReference type="NCBIfam" id="NF008490">
    <property type="entry name" value="PRK11401.1"/>
    <property type="match status" value="1"/>
</dbReference>
<dbReference type="NCBIfam" id="TIGR00004">
    <property type="entry name" value="Rid family detoxifying hydrolase"/>
    <property type="match status" value="1"/>
</dbReference>
<dbReference type="PANTHER" id="PTHR11803">
    <property type="entry name" value="2-IMINOBUTANOATE/2-IMINOPROPANOATE DEAMINASE RIDA"/>
    <property type="match status" value="1"/>
</dbReference>
<dbReference type="PANTHER" id="PTHR11803:SF39">
    <property type="entry name" value="2-IMINOBUTANOATE_2-IMINOPROPANOATE DEAMINASE"/>
    <property type="match status" value="1"/>
</dbReference>
<dbReference type="Pfam" id="PF01042">
    <property type="entry name" value="Ribonuc_L-PSP"/>
    <property type="match status" value="1"/>
</dbReference>
<dbReference type="SUPFAM" id="SSF55298">
    <property type="entry name" value="YjgF-like"/>
    <property type="match status" value="1"/>
</dbReference>
<dbReference type="PROSITE" id="PS01094">
    <property type="entry name" value="UPF0076"/>
    <property type="match status" value="1"/>
</dbReference>
<sequence>MKKIIETQRAPGAIGPYVQGVDLGSMVFTSGQIPVCPQTGEIPADVQDQARLSLENVKAIVVAAGLSVGDIIKMTVFITDLNDFATINEVYKQFFDEHQATYPTRSCVQVARLPKDVKLEIEAIAVRSA</sequence>
<proteinExistence type="inferred from homology"/>
<name>TDCF_SHIFL</name>
<reference key="1">
    <citation type="journal article" date="2002" name="Nucleic Acids Res.">
        <title>Genome sequence of Shigella flexneri 2a: insights into pathogenicity through comparison with genomes of Escherichia coli K12 and O157.</title>
        <authorList>
            <person name="Jin Q."/>
            <person name="Yuan Z."/>
            <person name="Xu J."/>
            <person name="Wang Y."/>
            <person name="Shen Y."/>
            <person name="Lu W."/>
            <person name="Wang J."/>
            <person name="Liu H."/>
            <person name="Yang J."/>
            <person name="Yang F."/>
            <person name="Zhang X."/>
            <person name="Zhang J."/>
            <person name="Yang G."/>
            <person name="Wu H."/>
            <person name="Qu D."/>
            <person name="Dong J."/>
            <person name="Sun L."/>
            <person name="Xue Y."/>
            <person name="Zhao A."/>
            <person name="Gao Y."/>
            <person name="Zhu J."/>
            <person name="Kan B."/>
            <person name="Ding K."/>
            <person name="Chen S."/>
            <person name="Cheng H."/>
            <person name="Yao Z."/>
            <person name="He B."/>
            <person name="Chen R."/>
            <person name="Ma D."/>
            <person name="Qiang B."/>
            <person name="Wen Y."/>
            <person name="Hou Y."/>
            <person name="Yu J."/>
        </authorList>
    </citation>
    <scope>NUCLEOTIDE SEQUENCE [LARGE SCALE GENOMIC DNA]</scope>
    <source>
        <strain>301 / Serotype 2a</strain>
    </source>
</reference>
<reference key="2">
    <citation type="journal article" date="2003" name="Infect. Immun.">
        <title>Complete genome sequence and comparative genomics of Shigella flexneri serotype 2a strain 2457T.</title>
        <authorList>
            <person name="Wei J."/>
            <person name="Goldberg M.B."/>
            <person name="Burland V."/>
            <person name="Venkatesan M.M."/>
            <person name="Deng W."/>
            <person name="Fournier G."/>
            <person name="Mayhew G.F."/>
            <person name="Plunkett G. III"/>
            <person name="Rose D.J."/>
            <person name="Darling A."/>
            <person name="Mau B."/>
            <person name="Perna N.T."/>
            <person name="Payne S.M."/>
            <person name="Runyen-Janecky L.J."/>
            <person name="Zhou S."/>
            <person name="Schwartz D.C."/>
            <person name="Blattner F.R."/>
        </authorList>
    </citation>
    <scope>NUCLEOTIDE SEQUENCE [LARGE SCALE GENOMIC DNA]</scope>
    <source>
        <strain>ATCC 700930 / 2457T / Serotype 2a</strain>
    </source>
</reference>
<evidence type="ECO:0000250" key="1"/>
<evidence type="ECO:0000305" key="2"/>
<gene>
    <name type="primary">tdcF</name>
    <name type="ordered locus">SF3153</name>
    <name type="ordered locus">S3365</name>
</gene>
<feature type="chain" id="PRO_0000170318" description="Putative reactive intermediate deaminase TdcF">
    <location>
        <begin position="1"/>
        <end position="129"/>
    </location>
</feature>
<feature type="binding site" evidence="1">
    <location>
        <begin position="105"/>
        <end position="107"/>
    </location>
    <ligand>
        <name>substrate</name>
    </ligand>
</feature>
<feature type="binding site" evidence="1">
    <location>
        <position position="120"/>
    </location>
    <ligand>
        <name>substrate</name>
    </ligand>
</feature>
<feature type="modified residue" description="N6-(pyridoxal phosphate)lysine" evidence="1">
    <location>
        <position position="58"/>
    </location>
</feature>
<accession>P0AGL4</accession>
<accession>P42631</accession>
<protein>
    <recommendedName>
        <fullName>Putative reactive intermediate deaminase TdcF</fullName>
        <ecNumber>3.5.4.-</ecNumber>
    </recommendedName>
</protein>